<accession>B1ZNA6</accession>
<proteinExistence type="inferred from homology"/>
<feature type="chain" id="PRO_1000114818" description="Pyridoxine 5'-phosphate synthase">
    <location>
        <begin position="1"/>
        <end position="248"/>
    </location>
</feature>
<feature type="active site" description="Proton acceptor" evidence="1">
    <location>
        <position position="52"/>
    </location>
</feature>
<feature type="active site" description="Proton acceptor" evidence="1">
    <location>
        <position position="79"/>
    </location>
</feature>
<feature type="active site" description="Proton donor" evidence="1">
    <location>
        <position position="201"/>
    </location>
</feature>
<feature type="binding site" evidence="1">
    <location>
        <position position="7"/>
    </location>
    <ligand>
        <name>3-amino-2-oxopropyl phosphate</name>
        <dbReference type="ChEBI" id="CHEBI:57279"/>
    </ligand>
</feature>
<feature type="binding site" evidence="1">
    <location>
        <begin position="9"/>
        <end position="10"/>
    </location>
    <ligand>
        <name>1-deoxy-D-xylulose 5-phosphate</name>
        <dbReference type="ChEBI" id="CHEBI:57792"/>
    </ligand>
</feature>
<feature type="binding site" evidence="1">
    <location>
        <position position="18"/>
    </location>
    <ligand>
        <name>3-amino-2-oxopropyl phosphate</name>
        <dbReference type="ChEBI" id="CHEBI:57279"/>
    </ligand>
</feature>
<feature type="binding site" evidence="1">
    <location>
        <position position="54"/>
    </location>
    <ligand>
        <name>1-deoxy-D-xylulose 5-phosphate</name>
        <dbReference type="ChEBI" id="CHEBI:57792"/>
    </ligand>
</feature>
<feature type="binding site" evidence="1">
    <location>
        <position position="59"/>
    </location>
    <ligand>
        <name>1-deoxy-D-xylulose 5-phosphate</name>
        <dbReference type="ChEBI" id="CHEBI:57792"/>
    </ligand>
</feature>
<feature type="binding site" evidence="1">
    <location>
        <position position="109"/>
    </location>
    <ligand>
        <name>1-deoxy-D-xylulose 5-phosphate</name>
        <dbReference type="ChEBI" id="CHEBI:57792"/>
    </ligand>
</feature>
<feature type="binding site" evidence="1">
    <location>
        <position position="202"/>
    </location>
    <ligand>
        <name>3-amino-2-oxopropyl phosphate</name>
        <dbReference type="ChEBI" id="CHEBI:57279"/>
    </ligand>
</feature>
<feature type="binding site" evidence="1">
    <location>
        <begin position="223"/>
        <end position="224"/>
    </location>
    <ligand>
        <name>3-amino-2-oxopropyl phosphate</name>
        <dbReference type="ChEBI" id="CHEBI:57279"/>
    </ligand>
</feature>
<feature type="site" description="Transition state stabilizer" evidence="1">
    <location>
        <position position="160"/>
    </location>
</feature>
<evidence type="ECO:0000255" key="1">
    <source>
        <dbReference type="HAMAP-Rule" id="MF_00279"/>
    </source>
</evidence>
<reference key="1">
    <citation type="journal article" date="2011" name="J. Bacteriol.">
        <title>Genome sequence of the verrucomicrobium Opitutus terrae PB90-1, an abundant inhabitant of rice paddy soil ecosystems.</title>
        <authorList>
            <person name="van Passel M.W."/>
            <person name="Kant R."/>
            <person name="Palva A."/>
            <person name="Copeland A."/>
            <person name="Lucas S."/>
            <person name="Lapidus A."/>
            <person name="Glavina del Rio T."/>
            <person name="Pitluck S."/>
            <person name="Goltsman E."/>
            <person name="Clum A."/>
            <person name="Sun H."/>
            <person name="Schmutz J."/>
            <person name="Larimer F.W."/>
            <person name="Land M.L."/>
            <person name="Hauser L."/>
            <person name="Kyrpides N."/>
            <person name="Mikhailova N."/>
            <person name="Richardson P.P."/>
            <person name="Janssen P.H."/>
            <person name="de Vos W.M."/>
            <person name="Smidt H."/>
        </authorList>
    </citation>
    <scope>NUCLEOTIDE SEQUENCE [LARGE SCALE GENOMIC DNA]</scope>
    <source>
        <strain>DSM 11246 / JCM 15787 / PB90-1</strain>
    </source>
</reference>
<sequence length="248" mass="27418">MILLGVNIDHCATLRQARYRQAEATAGGPIEPDPVTLALAAERAGADGITVHLREDRRHIQERDVWRLRESIATRLNFEMACTPAMTQLALKLKPESVCLVPENRQEITTEGGLDVTAQRDRVRACVEAMNAAGIQASLFIDPDEQQIELAAQLHAPCVELHTGAYASSYPQPTSRTKEFQRLRMGAARAHELGLIVNAGHGINYVNIAEVRTLPHLHELNIGHSIISRALFTGIDEAVREMKVRMNP</sequence>
<comment type="function">
    <text evidence="1">Catalyzes the complicated ring closure reaction between the two acyclic compounds 1-deoxy-D-xylulose-5-phosphate (DXP) and 3-amino-2-oxopropyl phosphate (1-amino-acetone-3-phosphate or AAP) to form pyridoxine 5'-phosphate (PNP) and inorganic phosphate.</text>
</comment>
<comment type="catalytic activity">
    <reaction evidence="1">
        <text>3-amino-2-oxopropyl phosphate + 1-deoxy-D-xylulose 5-phosphate = pyridoxine 5'-phosphate + phosphate + 2 H2O + H(+)</text>
        <dbReference type="Rhea" id="RHEA:15265"/>
        <dbReference type="ChEBI" id="CHEBI:15377"/>
        <dbReference type="ChEBI" id="CHEBI:15378"/>
        <dbReference type="ChEBI" id="CHEBI:43474"/>
        <dbReference type="ChEBI" id="CHEBI:57279"/>
        <dbReference type="ChEBI" id="CHEBI:57792"/>
        <dbReference type="ChEBI" id="CHEBI:58589"/>
        <dbReference type="EC" id="2.6.99.2"/>
    </reaction>
</comment>
<comment type="pathway">
    <text evidence="1">Cofactor biosynthesis; pyridoxine 5'-phosphate biosynthesis; pyridoxine 5'-phosphate from D-erythrose 4-phosphate: step 5/5.</text>
</comment>
<comment type="subunit">
    <text evidence="1">Homooctamer; tetramer of dimers.</text>
</comment>
<comment type="subcellular location">
    <subcellularLocation>
        <location evidence="1">Cytoplasm</location>
    </subcellularLocation>
</comment>
<comment type="similarity">
    <text evidence="1">Belongs to the PNP synthase family.</text>
</comment>
<protein>
    <recommendedName>
        <fullName evidence="1">Pyridoxine 5'-phosphate synthase</fullName>
        <shortName evidence="1">PNP synthase</shortName>
        <ecNumber evidence="1">2.6.99.2</ecNumber>
    </recommendedName>
</protein>
<keyword id="KW-0963">Cytoplasm</keyword>
<keyword id="KW-0664">Pyridoxine biosynthesis</keyword>
<keyword id="KW-1185">Reference proteome</keyword>
<keyword id="KW-0808">Transferase</keyword>
<organism>
    <name type="scientific">Opitutus terrae (strain DSM 11246 / JCM 15787 / PB90-1)</name>
    <dbReference type="NCBI Taxonomy" id="452637"/>
    <lineage>
        <taxon>Bacteria</taxon>
        <taxon>Pseudomonadati</taxon>
        <taxon>Verrucomicrobiota</taxon>
        <taxon>Opitutia</taxon>
        <taxon>Opitutales</taxon>
        <taxon>Opitutaceae</taxon>
        <taxon>Opitutus</taxon>
    </lineage>
</organism>
<gene>
    <name evidence="1" type="primary">pdxJ</name>
    <name type="ordered locus">Oter_0184</name>
</gene>
<dbReference type="EC" id="2.6.99.2" evidence="1"/>
<dbReference type="EMBL" id="CP001032">
    <property type="protein sequence ID" value="ACB73475.1"/>
    <property type="molecule type" value="Genomic_DNA"/>
</dbReference>
<dbReference type="RefSeq" id="WP_012373013.1">
    <property type="nucleotide sequence ID" value="NC_010571.1"/>
</dbReference>
<dbReference type="SMR" id="B1ZNA6"/>
<dbReference type="STRING" id="452637.Oter_0184"/>
<dbReference type="KEGG" id="ote:Oter_0184"/>
<dbReference type="eggNOG" id="COG0854">
    <property type="taxonomic scope" value="Bacteria"/>
</dbReference>
<dbReference type="HOGENOM" id="CLU_074563_0_0_0"/>
<dbReference type="OrthoDB" id="9806590at2"/>
<dbReference type="UniPathway" id="UPA00244">
    <property type="reaction ID" value="UER00313"/>
</dbReference>
<dbReference type="Proteomes" id="UP000007013">
    <property type="component" value="Chromosome"/>
</dbReference>
<dbReference type="GO" id="GO:0005829">
    <property type="term" value="C:cytosol"/>
    <property type="evidence" value="ECO:0007669"/>
    <property type="project" value="TreeGrafter"/>
</dbReference>
<dbReference type="GO" id="GO:0033856">
    <property type="term" value="F:pyridoxine 5'-phosphate synthase activity"/>
    <property type="evidence" value="ECO:0007669"/>
    <property type="project" value="UniProtKB-EC"/>
</dbReference>
<dbReference type="GO" id="GO:0008615">
    <property type="term" value="P:pyridoxine biosynthetic process"/>
    <property type="evidence" value="ECO:0007669"/>
    <property type="project" value="UniProtKB-UniRule"/>
</dbReference>
<dbReference type="CDD" id="cd00003">
    <property type="entry name" value="PNPsynthase"/>
    <property type="match status" value="1"/>
</dbReference>
<dbReference type="Gene3D" id="3.20.20.70">
    <property type="entry name" value="Aldolase class I"/>
    <property type="match status" value="1"/>
</dbReference>
<dbReference type="HAMAP" id="MF_00279">
    <property type="entry name" value="PdxJ"/>
    <property type="match status" value="1"/>
</dbReference>
<dbReference type="InterPro" id="IPR013785">
    <property type="entry name" value="Aldolase_TIM"/>
</dbReference>
<dbReference type="InterPro" id="IPR004569">
    <property type="entry name" value="PyrdxlP_synth_PdxJ"/>
</dbReference>
<dbReference type="InterPro" id="IPR036130">
    <property type="entry name" value="Pyridoxine-5'_phos_synth"/>
</dbReference>
<dbReference type="NCBIfam" id="TIGR00559">
    <property type="entry name" value="pdxJ"/>
    <property type="match status" value="1"/>
</dbReference>
<dbReference type="NCBIfam" id="NF003625">
    <property type="entry name" value="PRK05265.1-3"/>
    <property type="match status" value="1"/>
</dbReference>
<dbReference type="NCBIfam" id="NF003627">
    <property type="entry name" value="PRK05265.1-5"/>
    <property type="match status" value="1"/>
</dbReference>
<dbReference type="PANTHER" id="PTHR30456">
    <property type="entry name" value="PYRIDOXINE 5'-PHOSPHATE SYNTHASE"/>
    <property type="match status" value="1"/>
</dbReference>
<dbReference type="PANTHER" id="PTHR30456:SF0">
    <property type="entry name" value="PYRIDOXINE 5'-PHOSPHATE SYNTHASE"/>
    <property type="match status" value="1"/>
</dbReference>
<dbReference type="Pfam" id="PF03740">
    <property type="entry name" value="PdxJ"/>
    <property type="match status" value="1"/>
</dbReference>
<dbReference type="SUPFAM" id="SSF63892">
    <property type="entry name" value="Pyridoxine 5'-phosphate synthase"/>
    <property type="match status" value="1"/>
</dbReference>
<name>PDXJ_OPITP</name>